<gene>
    <name evidence="1" type="primary">URM1</name>
    <name type="ordered locus">YALI0E19481g</name>
</gene>
<dbReference type="EMBL" id="CR382131">
    <property type="protein sequence ID" value="CAR64334.1"/>
    <property type="molecule type" value="Genomic_DNA"/>
</dbReference>
<dbReference type="RefSeq" id="XP_002143076.1">
    <property type="nucleotide sequence ID" value="XM_002143040.1"/>
</dbReference>
<dbReference type="SMR" id="B5FVI0"/>
<dbReference type="FunCoup" id="B5FVI0">
    <property type="interactions" value="904"/>
</dbReference>
<dbReference type="STRING" id="284591.B5FVI0"/>
<dbReference type="EnsemblFungi" id="CAR64334">
    <property type="protein sequence ID" value="CAR64334"/>
    <property type="gene ID" value="YALI0_E19481g"/>
</dbReference>
<dbReference type="KEGG" id="yli:7009564"/>
<dbReference type="VEuPathDB" id="FungiDB:YALI0_E19481g"/>
<dbReference type="HOGENOM" id="CLU_148208_0_0_1"/>
<dbReference type="InParanoid" id="B5FVI0"/>
<dbReference type="OMA" id="IHFMAEK"/>
<dbReference type="OrthoDB" id="126246at4891"/>
<dbReference type="UniPathway" id="UPA00988"/>
<dbReference type="Proteomes" id="UP000001300">
    <property type="component" value="Chromosome E"/>
</dbReference>
<dbReference type="GO" id="GO:0005829">
    <property type="term" value="C:cytosol"/>
    <property type="evidence" value="ECO:0007669"/>
    <property type="project" value="UniProtKB-UniRule"/>
</dbReference>
<dbReference type="GO" id="GO:0005634">
    <property type="term" value="C:nucleus"/>
    <property type="evidence" value="ECO:0000318"/>
    <property type="project" value="GO_Central"/>
</dbReference>
<dbReference type="GO" id="GO:0031386">
    <property type="term" value="F:protein tag activity"/>
    <property type="evidence" value="ECO:0000318"/>
    <property type="project" value="GO_Central"/>
</dbReference>
<dbReference type="GO" id="GO:0032447">
    <property type="term" value="P:protein urmylation"/>
    <property type="evidence" value="ECO:0000318"/>
    <property type="project" value="GO_Central"/>
</dbReference>
<dbReference type="GO" id="GO:0034227">
    <property type="term" value="P:tRNA thio-modification"/>
    <property type="evidence" value="ECO:0007669"/>
    <property type="project" value="UniProtKB-UniRule"/>
</dbReference>
<dbReference type="GO" id="GO:0002098">
    <property type="term" value="P:tRNA wobble uridine modification"/>
    <property type="evidence" value="ECO:0007669"/>
    <property type="project" value="UniProtKB-UniRule"/>
</dbReference>
<dbReference type="CDD" id="cd01764">
    <property type="entry name" value="Ubl_Urm1"/>
    <property type="match status" value="1"/>
</dbReference>
<dbReference type="Gene3D" id="3.10.20.30">
    <property type="match status" value="1"/>
</dbReference>
<dbReference type="HAMAP" id="MF_03048">
    <property type="entry name" value="Urm1"/>
    <property type="match status" value="1"/>
</dbReference>
<dbReference type="InterPro" id="IPR012675">
    <property type="entry name" value="Beta-grasp_dom_sf"/>
</dbReference>
<dbReference type="InterPro" id="IPR016155">
    <property type="entry name" value="Mopterin_synth/thiamin_S_b"/>
</dbReference>
<dbReference type="InterPro" id="IPR015221">
    <property type="entry name" value="Urm1"/>
</dbReference>
<dbReference type="PANTHER" id="PTHR14986">
    <property type="entry name" value="RURM1 PROTEIN"/>
    <property type="match status" value="1"/>
</dbReference>
<dbReference type="Pfam" id="PF09138">
    <property type="entry name" value="Urm1"/>
    <property type="match status" value="1"/>
</dbReference>
<dbReference type="PIRSF" id="PIRSF037379">
    <property type="entry name" value="Ubiquitin-related_modifier_1"/>
    <property type="match status" value="1"/>
</dbReference>
<dbReference type="SUPFAM" id="SSF54285">
    <property type="entry name" value="MoaD/ThiS"/>
    <property type="match status" value="1"/>
</dbReference>
<feature type="chain" id="PRO_0000367890" description="Ubiquitin-related modifier 1">
    <location>
        <begin position="1"/>
        <end position="99"/>
    </location>
</feature>
<feature type="modified residue" description="1-thioglycine" evidence="1">
    <location>
        <position position="99"/>
    </location>
</feature>
<feature type="cross-link" description="Glycyl lysine isopeptide (Gly-Lys) (interchain with K-? in acceptor proteins)" evidence="1">
    <location>
        <position position="99"/>
    </location>
</feature>
<protein>
    <recommendedName>
        <fullName evidence="1">Ubiquitin-related modifier 1</fullName>
    </recommendedName>
</protein>
<keyword id="KW-0963">Cytoplasm</keyword>
<keyword id="KW-1017">Isopeptide bond</keyword>
<keyword id="KW-1185">Reference proteome</keyword>
<keyword id="KW-0819">tRNA processing</keyword>
<keyword id="KW-0833">Ubl conjugation pathway</keyword>
<comment type="function">
    <text evidence="1">Acts as a sulfur carrier required for 2-thiolation of mcm(5)S(2)U at tRNA wobble positions of cytosolic tRNA(Lys), tRNA(Glu) and tRNA(Gln). Serves as sulfur donor in tRNA 2-thiolation reaction by being thiocarboxylated (-COSH) at its C-terminus by the MOCS3 homolog UBA4. The sulfur is then transferred to tRNA to form 2-thiolation of mcm(5)S(2)U. Prior mcm(5) tRNA modification by the elongator complex is required for 2-thiolation. Also acts as a ubiquitin-like protein (UBL) that is covalently conjugated via an isopeptide bond to lysine residues of target proteins such as AHP1. The thiocarboxylated form serves as substrate for conjugation and oxidative stress specifically induces the formation of UBL-protein conjugates.</text>
</comment>
<comment type="pathway">
    <text evidence="1">tRNA modification; 5-methoxycarbonylmethyl-2-thiouridine-tRNA biosynthesis.</text>
</comment>
<comment type="subcellular location">
    <subcellularLocation>
        <location evidence="1">Cytoplasm</location>
    </subcellularLocation>
</comment>
<comment type="PTM">
    <text evidence="1">C-terminal thiocarboxylation occurs in 2 steps, it is first acyl-adenylated (-COAMP) via the hesA/moeB/thiF part of UBA4, then thiocarboxylated (-COSH) via the rhodanese domain of UBA4.</text>
</comment>
<comment type="similarity">
    <text evidence="1">Belongs to the URM1 family.</text>
</comment>
<name>URM1_YARLI</name>
<evidence type="ECO:0000255" key="1">
    <source>
        <dbReference type="HAMAP-Rule" id="MF_03048"/>
    </source>
</evidence>
<sequence>MQITVEFSGGLETAFDGNKKHVLDVPEGSSVNWLLHHMVETLMPDHKREEGKNIFLQDESVRPGVLVLINDSDWELEGEDQYILQPRDVIIFASTLHGG</sequence>
<proteinExistence type="inferred from homology"/>
<accession>B5FVI0</accession>
<organism>
    <name type="scientific">Yarrowia lipolytica (strain CLIB 122 / E 150)</name>
    <name type="common">Yeast</name>
    <name type="synonym">Candida lipolytica</name>
    <dbReference type="NCBI Taxonomy" id="284591"/>
    <lineage>
        <taxon>Eukaryota</taxon>
        <taxon>Fungi</taxon>
        <taxon>Dikarya</taxon>
        <taxon>Ascomycota</taxon>
        <taxon>Saccharomycotina</taxon>
        <taxon>Dipodascomycetes</taxon>
        <taxon>Dipodascales</taxon>
        <taxon>Dipodascales incertae sedis</taxon>
        <taxon>Yarrowia</taxon>
    </lineage>
</organism>
<reference key="1">
    <citation type="journal article" date="2004" name="Nature">
        <title>Genome evolution in yeasts.</title>
        <authorList>
            <person name="Dujon B."/>
            <person name="Sherman D."/>
            <person name="Fischer G."/>
            <person name="Durrens P."/>
            <person name="Casaregola S."/>
            <person name="Lafontaine I."/>
            <person name="de Montigny J."/>
            <person name="Marck C."/>
            <person name="Neuveglise C."/>
            <person name="Talla E."/>
            <person name="Goffard N."/>
            <person name="Frangeul L."/>
            <person name="Aigle M."/>
            <person name="Anthouard V."/>
            <person name="Babour A."/>
            <person name="Barbe V."/>
            <person name="Barnay S."/>
            <person name="Blanchin S."/>
            <person name="Beckerich J.-M."/>
            <person name="Beyne E."/>
            <person name="Bleykasten C."/>
            <person name="Boisrame A."/>
            <person name="Boyer J."/>
            <person name="Cattolico L."/>
            <person name="Confanioleri F."/>
            <person name="de Daruvar A."/>
            <person name="Despons L."/>
            <person name="Fabre E."/>
            <person name="Fairhead C."/>
            <person name="Ferry-Dumazet H."/>
            <person name="Groppi A."/>
            <person name="Hantraye F."/>
            <person name="Hennequin C."/>
            <person name="Jauniaux N."/>
            <person name="Joyet P."/>
            <person name="Kachouri R."/>
            <person name="Kerrest A."/>
            <person name="Koszul R."/>
            <person name="Lemaire M."/>
            <person name="Lesur I."/>
            <person name="Ma L."/>
            <person name="Muller H."/>
            <person name="Nicaud J.-M."/>
            <person name="Nikolski M."/>
            <person name="Oztas S."/>
            <person name="Ozier-Kalogeropoulos O."/>
            <person name="Pellenz S."/>
            <person name="Potier S."/>
            <person name="Richard G.-F."/>
            <person name="Straub M.-L."/>
            <person name="Suleau A."/>
            <person name="Swennen D."/>
            <person name="Tekaia F."/>
            <person name="Wesolowski-Louvel M."/>
            <person name="Westhof E."/>
            <person name="Wirth B."/>
            <person name="Zeniou-Meyer M."/>
            <person name="Zivanovic Y."/>
            <person name="Bolotin-Fukuhara M."/>
            <person name="Thierry A."/>
            <person name="Bouchier C."/>
            <person name="Caudron B."/>
            <person name="Scarpelli C."/>
            <person name="Gaillardin C."/>
            <person name="Weissenbach J."/>
            <person name="Wincker P."/>
            <person name="Souciet J.-L."/>
        </authorList>
    </citation>
    <scope>NUCLEOTIDE SEQUENCE [LARGE SCALE GENOMIC DNA]</scope>
    <source>
        <strain>CLIB 122 / E 150</strain>
    </source>
</reference>